<gene>
    <name evidence="1" type="primary">rpmI</name>
    <name type="ordered locus">NT01CX_1762</name>
</gene>
<reference key="1">
    <citation type="journal article" date="2006" name="Nat. Biotechnol.">
        <title>The genome and transcriptomes of the anti-tumor agent Clostridium novyi-NT.</title>
        <authorList>
            <person name="Bettegowda C."/>
            <person name="Huang X."/>
            <person name="Lin J."/>
            <person name="Cheong I."/>
            <person name="Kohli M."/>
            <person name="Szabo S.A."/>
            <person name="Zhang X."/>
            <person name="Diaz L.A. Jr."/>
            <person name="Velculescu V.E."/>
            <person name="Parmigiani G."/>
            <person name="Kinzler K.W."/>
            <person name="Vogelstein B."/>
            <person name="Zhou S."/>
        </authorList>
    </citation>
    <scope>NUCLEOTIDE SEQUENCE [LARGE SCALE GENOMIC DNA]</scope>
    <source>
        <strain>NT</strain>
    </source>
</reference>
<comment type="similarity">
    <text evidence="1">Belongs to the bacterial ribosomal protein bL35 family.</text>
</comment>
<proteinExistence type="inferred from homology"/>
<dbReference type="EMBL" id="CP000382">
    <property type="protein sequence ID" value="ABK60681.1"/>
    <property type="molecule type" value="Genomic_DNA"/>
</dbReference>
<dbReference type="RefSeq" id="WP_011721840.1">
    <property type="nucleotide sequence ID" value="NC_008593.1"/>
</dbReference>
<dbReference type="SMR" id="A0PZN3"/>
<dbReference type="STRING" id="386415.NT01CX_1762"/>
<dbReference type="KEGG" id="cno:NT01CX_1762"/>
<dbReference type="eggNOG" id="COG0291">
    <property type="taxonomic scope" value="Bacteria"/>
</dbReference>
<dbReference type="HOGENOM" id="CLU_169643_1_1_9"/>
<dbReference type="Proteomes" id="UP000008220">
    <property type="component" value="Chromosome"/>
</dbReference>
<dbReference type="GO" id="GO:0022625">
    <property type="term" value="C:cytosolic large ribosomal subunit"/>
    <property type="evidence" value="ECO:0007669"/>
    <property type="project" value="TreeGrafter"/>
</dbReference>
<dbReference type="GO" id="GO:0003735">
    <property type="term" value="F:structural constituent of ribosome"/>
    <property type="evidence" value="ECO:0007669"/>
    <property type="project" value="InterPro"/>
</dbReference>
<dbReference type="GO" id="GO:0006412">
    <property type="term" value="P:translation"/>
    <property type="evidence" value="ECO:0007669"/>
    <property type="project" value="UniProtKB-UniRule"/>
</dbReference>
<dbReference type="FunFam" id="4.10.410.60:FF:000001">
    <property type="entry name" value="50S ribosomal protein L35"/>
    <property type="match status" value="1"/>
</dbReference>
<dbReference type="Gene3D" id="4.10.410.60">
    <property type="match status" value="1"/>
</dbReference>
<dbReference type="HAMAP" id="MF_00514">
    <property type="entry name" value="Ribosomal_bL35"/>
    <property type="match status" value="1"/>
</dbReference>
<dbReference type="InterPro" id="IPR001706">
    <property type="entry name" value="Ribosomal_bL35"/>
</dbReference>
<dbReference type="InterPro" id="IPR021137">
    <property type="entry name" value="Ribosomal_bL35-like"/>
</dbReference>
<dbReference type="InterPro" id="IPR018265">
    <property type="entry name" value="Ribosomal_bL35_CS"/>
</dbReference>
<dbReference type="InterPro" id="IPR037229">
    <property type="entry name" value="Ribosomal_bL35_sf"/>
</dbReference>
<dbReference type="NCBIfam" id="TIGR00001">
    <property type="entry name" value="rpmI_bact"/>
    <property type="match status" value="1"/>
</dbReference>
<dbReference type="PANTHER" id="PTHR33343">
    <property type="entry name" value="54S RIBOSOMAL PROTEIN BL35M"/>
    <property type="match status" value="1"/>
</dbReference>
<dbReference type="PANTHER" id="PTHR33343:SF1">
    <property type="entry name" value="LARGE RIBOSOMAL SUBUNIT PROTEIN BL35M"/>
    <property type="match status" value="1"/>
</dbReference>
<dbReference type="Pfam" id="PF01632">
    <property type="entry name" value="Ribosomal_L35p"/>
    <property type="match status" value="1"/>
</dbReference>
<dbReference type="PRINTS" id="PR00064">
    <property type="entry name" value="RIBOSOMALL35"/>
</dbReference>
<dbReference type="SUPFAM" id="SSF143034">
    <property type="entry name" value="L35p-like"/>
    <property type="match status" value="1"/>
</dbReference>
<dbReference type="PROSITE" id="PS00936">
    <property type="entry name" value="RIBOSOMAL_L35"/>
    <property type="match status" value="1"/>
</dbReference>
<keyword id="KW-1185">Reference proteome</keyword>
<keyword id="KW-0687">Ribonucleoprotein</keyword>
<keyword id="KW-0689">Ribosomal protein</keyword>
<sequence>MPKMKTHRGAAKRFKKTGSGKLKRAKAFKSHILTKKSSKTKRNLRKSGLVSEAQEKVMKKLLPYL</sequence>
<protein>
    <recommendedName>
        <fullName evidence="1">Large ribosomal subunit protein bL35</fullName>
    </recommendedName>
    <alternativeName>
        <fullName evidence="3">50S ribosomal protein L35</fullName>
    </alternativeName>
</protein>
<feature type="chain" id="PRO_1000050683" description="Large ribosomal subunit protein bL35">
    <location>
        <begin position="1"/>
        <end position="65"/>
    </location>
</feature>
<feature type="region of interest" description="Disordered" evidence="2">
    <location>
        <begin position="1"/>
        <end position="26"/>
    </location>
</feature>
<organism>
    <name type="scientific">Clostridium novyi (strain NT)</name>
    <dbReference type="NCBI Taxonomy" id="386415"/>
    <lineage>
        <taxon>Bacteria</taxon>
        <taxon>Bacillati</taxon>
        <taxon>Bacillota</taxon>
        <taxon>Clostridia</taxon>
        <taxon>Eubacteriales</taxon>
        <taxon>Clostridiaceae</taxon>
        <taxon>Clostridium</taxon>
    </lineage>
</organism>
<accession>A0PZN3</accession>
<name>RL35_CLONN</name>
<evidence type="ECO:0000255" key="1">
    <source>
        <dbReference type="HAMAP-Rule" id="MF_00514"/>
    </source>
</evidence>
<evidence type="ECO:0000256" key="2">
    <source>
        <dbReference type="SAM" id="MobiDB-lite"/>
    </source>
</evidence>
<evidence type="ECO:0000305" key="3"/>